<keyword id="KW-1015">Disulfide bond</keyword>
<keyword id="KW-1199">Hemostasis impairing toxin</keyword>
<keyword id="KW-0964">Secreted</keyword>
<keyword id="KW-0732">Signal</keyword>
<keyword id="KW-0800">Toxin</keyword>
<feature type="signal peptide" evidence="1">
    <location>
        <begin position="1"/>
        <end position="23"/>
    </location>
</feature>
<feature type="chain" id="PRO_0000356327" description="Snaclec A11">
    <location>
        <begin position="24"/>
        <end position="156"/>
    </location>
</feature>
<feature type="domain" description="C-type lectin" evidence="2">
    <location>
        <begin position="34"/>
        <end position="155"/>
    </location>
</feature>
<feature type="disulfide bond" evidence="2">
    <location>
        <begin position="27"/>
        <end position="38"/>
    </location>
</feature>
<feature type="disulfide bond" evidence="2">
    <location>
        <begin position="55"/>
        <end position="154"/>
    </location>
</feature>
<feature type="disulfide bond" description="Interchain" evidence="2">
    <location>
        <position position="106"/>
    </location>
</feature>
<feature type="disulfide bond" evidence="2">
    <location>
        <begin position="129"/>
        <end position="146"/>
    </location>
</feature>
<accession>B4XSY6</accession>
<sequence length="156" mass="17738">MGRSISVSFGLLVVFLSLSGTGADFDCPSGWSAYDQHCYQAVDEPKSWADAEKFCTEQANGGHLVSIDSKKEANFVAELVSQNIKETRRTDFVWIGLRVEDKRQQCSSEWSDGSSINYQNWIEAESKKCLGLEKQTRYRKWVNLNCGQPYRFTCEI</sequence>
<proteinExistence type="evidence at transcript level"/>
<dbReference type="EMBL" id="EU085448">
    <property type="protein sequence ID" value="ABW82658.1"/>
    <property type="molecule type" value="mRNA"/>
</dbReference>
<dbReference type="SMR" id="B4XSY6"/>
<dbReference type="GO" id="GO:0005576">
    <property type="term" value="C:extracellular region"/>
    <property type="evidence" value="ECO:0007669"/>
    <property type="project" value="UniProtKB-SubCell"/>
</dbReference>
<dbReference type="GO" id="GO:0090729">
    <property type="term" value="F:toxin activity"/>
    <property type="evidence" value="ECO:0007669"/>
    <property type="project" value="UniProtKB-KW"/>
</dbReference>
<dbReference type="FunFam" id="3.10.100.10:FF:000087">
    <property type="entry name" value="Snaclec rhodocetin subunit delta"/>
    <property type="match status" value="1"/>
</dbReference>
<dbReference type="Gene3D" id="3.10.100.10">
    <property type="entry name" value="Mannose-Binding Protein A, subunit A"/>
    <property type="match status" value="1"/>
</dbReference>
<dbReference type="InterPro" id="IPR001304">
    <property type="entry name" value="C-type_lectin-like"/>
</dbReference>
<dbReference type="InterPro" id="IPR016186">
    <property type="entry name" value="C-type_lectin-like/link_sf"/>
</dbReference>
<dbReference type="InterPro" id="IPR050111">
    <property type="entry name" value="C-type_lectin/snaclec_domain"/>
</dbReference>
<dbReference type="InterPro" id="IPR018378">
    <property type="entry name" value="C-type_lectin_CS"/>
</dbReference>
<dbReference type="InterPro" id="IPR016187">
    <property type="entry name" value="CTDL_fold"/>
</dbReference>
<dbReference type="PANTHER" id="PTHR22803">
    <property type="entry name" value="MANNOSE, PHOSPHOLIPASE, LECTIN RECEPTOR RELATED"/>
    <property type="match status" value="1"/>
</dbReference>
<dbReference type="Pfam" id="PF00059">
    <property type="entry name" value="Lectin_C"/>
    <property type="match status" value="1"/>
</dbReference>
<dbReference type="PRINTS" id="PR01504">
    <property type="entry name" value="PNCREATITSAP"/>
</dbReference>
<dbReference type="SMART" id="SM00034">
    <property type="entry name" value="CLECT"/>
    <property type="match status" value="1"/>
</dbReference>
<dbReference type="SUPFAM" id="SSF56436">
    <property type="entry name" value="C-type lectin-like"/>
    <property type="match status" value="1"/>
</dbReference>
<dbReference type="PROSITE" id="PS00615">
    <property type="entry name" value="C_TYPE_LECTIN_1"/>
    <property type="match status" value="1"/>
</dbReference>
<dbReference type="PROSITE" id="PS50041">
    <property type="entry name" value="C_TYPE_LECTIN_2"/>
    <property type="match status" value="1"/>
</dbReference>
<protein>
    <recommendedName>
        <fullName>Snaclec A11</fullName>
    </recommendedName>
    <alternativeName>
        <fullName>C-type lectin A11</fullName>
    </alternativeName>
</protein>
<evidence type="ECO:0000250" key="1"/>
<evidence type="ECO:0000255" key="2">
    <source>
        <dbReference type="PROSITE-ProRule" id="PRU00040"/>
    </source>
</evidence>
<evidence type="ECO:0000305" key="3"/>
<organism>
    <name type="scientific">Macrovipera lebetinus</name>
    <name type="common">Levantine viper</name>
    <name type="synonym">Vipera lebetina</name>
    <dbReference type="NCBI Taxonomy" id="3148341"/>
    <lineage>
        <taxon>Eukaryota</taxon>
        <taxon>Metazoa</taxon>
        <taxon>Chordata</taxon>
        <taxon>Craniata</taxon>
        <taxon>Vertebrata</taxon>
        <taxon>Euteleostomi</taxon>
        <taxon>Lepidosauria</taxon>
        <taxon>Squamata</taxon>
        <taxon>Bifurcata</taxon>
        <taxon>Unidentata</taxon>
        <taxon>Episquamata</taxon>
        <taxon>Toxicofera</taxon>
        <taxon>Serpentes</taxon>
        <taxon>Colubroidea</taxon>
        <taxon>Viperidae</taxon>
        <taxon>Viperinae</taxon>
        <taxon>Macrovipera</taxon>
    </lineage>
</organism>
<comment type="function">
    <text evidence="1">Interferes with one step of hemostasis (modulation of platelet aggregation, or coagulation cascade, for example).</text>
</comment>
<comment type="subunit">
    <text evidence="1">Heterodimer; disulfide-linked.</text>
</comment>
<comment type="subcellular location">
    <subcellularLocation>
        <location evidence="1">Secreted</location>
    </subcellularLocation>
</comment>
<comment type="tissue specificity">
    <text>Expressed by the venom gland.</text>
</comment>
<comment type="miscellaneous">
    <text>Shows greater sequence similarity to the alpha than beta subunits compared to other heterodimer snaclecs.</text>
</comment>
<comment type="similarity">
    <text evidence="3">Belongs to the snaclec family.</text>
</comment>
<name>SLAB_MACLB</name>
<reference key="1">
    <citation type="journal article" date="2009" name="Toxicon">
        <title>C-type lectin protein isoforms of Macrovipera lebetina: cDNA cloning and genetic diversity.</title>
        <authorList>
            <person name="Jebali J."/>
            <person name="Bazaa A."/>
            <person name="Sarray S."/>
            <person name="Benhaj K."/>
            <person name="Karboul A."/>
            <person name="El Ayeb M."/>
            <person name="Marrakchi N."/>
            <person name="Gargouri A."/>
        </authorList>
    </citation>
    <scope>NUCLEOTIDE SEQUENCE [MRNA]</scope>
</reference>